<evidence type="ECO:0000255" key="1">
    <source>
        <dbReference type="HAMAP-Rule" id="MF_00182"/>
    </source>
</evidence>
<evidence type="ECO:0000256" key="2">
    <source>
        <dbReference type="SAM" id="MobiDB-lite"/>
    </source>
</evidence>
<evidence type="ECO:0000305" key="3"/>
<gene>
    <name evidence="1" type="primary">fmt</name>
    <name type="ordered locus">MT1450</name>
</gene>
<comment type="function">
    <text evidence="1">Attaches a formyl group to the free amino group of methionyl-tRNA(fMet). The formyl group appears to play a dual role in the initiator identity of N-formylmethionyl-tRNA by promoting its recognition by IF2 and preventing the misappropriation of this tRNA by the elongation apparatus.</text>
</comment>
<comment type="catalytic activity">
    <reaction evidence="1">
        <text>L-methionyl-tRNA(fMet) + (6R)-10-formyltetrahydrofolate = N-formyl-L-methionyl-tRNA(fMet) + (6S)-5,6,7,8-tetrahydrofolate + H(+)</text>
        <dbReference type="Rhea" id="RHEA:24380"/>
        <dbReference type="Rhea" id="RHEA-COMP:9952"/>
        <dbReference type="Rhea" id="RHEA-COMP:9953"/>
        <dbReference type="ChEBI" id="CHEBI:15378"/>
        <dbReference type="ChEBI" id="CHEBI:57453"/>
        <dbReference type="ChEBI" id="CHEBI:78530"/>
        <dbReference type="ChEBI" id="CHEBI:78844"/>
        <dbReference type="ChEBI" id="CHEBI:195366"/>
        <dbReference type="EC" id="2.1.2.9"/>
    </reaction>
</comment>
<comment type="similarity">
    <text evidence="1 3">Belongs to the Fmt family.</text>
</comment>
<organism>
    <name type="scientific">Mycobacterium tuberculosis (strain CDC 1551 / Oshkosh)</name>
    <dbReference type="NCBI Taxonomy" id="83331"/>
    <lineage>
        <taxon>Bacteria</taxon>
        <taxon>Bacillati</taxon>
        <taxon>Actinomycetota</taxon>
        <taxon>Actinomycetes</taxon>
        <taxon>Mycobacteriales</taxon>
        <taxon>Mycobacteriaceae</taxon>
        <taxon>Mycobacterium</taxon>
        <taxon>Mycobacterium tuberculosis complex</taxon>
    </lineage>
</organism>
<proteinExistence type="inferred from homology"/>
<accession>P9WND2</accession>
<accession>L0T863</accession>
<accession>P64134</accession>
<accession>P71674</accession>
<feature type="chain" id="PRO_0000427147" description="Methionyl-tRNA formyltransferase">
    <location>
        <begin position="1"/>
        <end position="312"/>
    </location>
</feature>
<feature type="region of interest" description="Disordered" evidence="2">
    <location>
        <begin position="34"/>
        <end position="54"/>
    </location>
</feature>
<feature type="binding site" evidence="1">
    <location>
        <begin position="110"/>
        <end position="113"/>
    </location>
    <ligand>
        <name>(6S)-5,6,7,8-tetrahydrofolate</name>
        <dbReference type="ChEBI" id="CHEBI:57453"/>
    </ligand>
</feature>
<reference key="1">
    <citation type="journal article" date="2002" name="J. Bacteriol.">
        <title>Whole-genome comparison of Mycobacterium tuberculosis clinical and laboratory strains.</title>
        <authorList>
            <person name="Fleischmann R.D."/>
            <person name="Alland D."/>
            <person name="Eisen J.A."/>
            <person name="Carpenter L."/>
            <person name="White O."/>
            <person name="Peterson J.D."/>
            <person name="DeBoy R.T."/>
            <person name="Dodson R.J."/>
            <person name="Gwinn M.L."/>
            <person name="Haft D.H."/>
            <person name="Hickey E.K."/>
            <person name="Kolonay J.F."/>
            <person name="Nelson W.C."/>
            <person name="Umayam L.A."/>
            <person name="Ermolaeva M.D."/>
            <person name="Salzberg S.L."/>
            <person name="Delcher A."/>
            <person name="Utterback T.R."/>
            <person name="Weidman J.F."/>
            <person name="Khouri H.M."/>
            <person name="Gill J."/>
            <person name="Mikula A."/>
            <person name="Bishai W."/>
            <person name="Jacobs W.R. Jr."/>
            <person name="Venter J.C."/>
            <person name="Fraser C.M."/>
        </authorList>
    </citation>
    <scope>NUCLEOTIDE SEQUENCE [LARGE SCALE GENOMIC DNA]</scope>
    <source>
        <strain>CDC 1551 / Oshkosh</strain>
    </source>
</reference>
<name>FMT_MYCTO</name>
<protein>
    <recommendedName>
        <fullName evidence="1">Methionyl-tRNA formyltransferase</fullName>
        <ecNumber evidence="1">2.1.2.9</ecNumber>
    </recommendedName>
</protein>
<keyword id="KW-0648">Protein biosynthesis</keyword>
<keyword id="KW-1185">Reference proteome</keyword>
<keyword id="KW-0808">Transferase</keyword>
<sequence>MRLVFAGTPEPALASLRRLIESPSHDVIAVLTRPDAASGRRGKPQPSPVAREAAERGIPVLRPSRPNSAEFVAELSDLAPECCAVVAYGALLGGPLLAVPPHGWVNLHFSLLPAWRGAAPVQAAIAAGDTITGATTFQIEPSLDSGPIYGVVTEVIQPTDTAGDLLKRLAVSGAALLSTTLDGIADQRLTPRPQPADGVSVAPKITVANARVRWDLPAAVVERRIRAVTPNPGAWTLIGDLRVKLGPVHLDAAHRPSKPLPPGGIHVERTSVWIGTGSEPVRLGQIQPPGKKLMNAADWARGARLDLAARAT</sequence>
<dbReference type="EC" id="2.1.2.9" evidence="1"/>
<dbReference type="EMBL" id="AE000516">
    <property type="protein sequence ID" value="AAK45715.1"/>
    <property type="molecule type" value="Genomic_DNA"/>
</dbReference>
<dbReference type="PIR" id="C70901">
    <property type="entry name" value="C70901"/>
</dbReference>
<dbReference type="RefSeq" id="WP_003900336.1">
    <property type="nucleotide sequence ID" value="NZ_KK341227.1"/>
</dbReference>
<dbReference type="SMR" id="P9WND2"/>
<dbReference type="GeneID" id="45425384"/>
<dbReference type="KEGG" id="mtc:MT1450"/>
<dbReference type="PATRIC" id="fig|83331.31.peg.1558"/>
<dbReference type="HOGENOM" id="CLU_033347_2_0_11"/>
<dbReference type="Proteomes" id="UP000001020">
    <property type="component" value="Chromosome"/>
</dbReference>
<dbReference type="GO" id="GO:0005829">
    <property type="term" value="C:cytosol"/>
    <property type="evidence" value="ECO:0007669"/>
    <property type="project" value="TreeGrafter"/>
</dbReference>
<dbReference type="GO" id="GO:0004479">
    <property type="term" value="F:methionyl-tRNA formyltransferase activity"/>
    <property type="evidence" value="ECO:0007669"/>
    <property type="project" value="UniProtKB-UniRule"/>
</dbReference>
<dbReference type="CDD" id="cd08646">
    <property type="entry name" value="FMT_core_Met-tRNA-FMT_N"/>
    <property type="match status" value="1"/>
</dbReference>
<dbReference type="CDD" id="cd08704">
    <property type="entry name" value="Met_tRNA_FMT_C"/>
    <property type="match status" value="1"/>
</dbReference>
<dbReference type="FunFam" id="3.40.50.12230:FF:000001">
    <property type="entry name" value="Methionyl-tRNA formyltransferase"/>
    <property type="match status" value="1"/>
</dbReference>
<dbReference type="Gene3D" id="3.40.50.12230">
    <property type="match status" value="1"/>
</dbReference>
<dbReference type="HAMAP" id="MF_00182">
    <property type="entry name" value="Formyl_trans"/>
    <property type="match status" value="1"/>
</dbReference>
<dbReference type="InterPro" id="IPR005794">
    <property type="entry name" value="Fmt"/>
</dbReference>
<dbReference type="InterPro" id="IPR005793">
    <property type="entry name" value="Formyl_trans_C"/>
</dbReference>
<dbReference type="InterPro" id="IPR002376">
    <property type="entry name" value="Formyl_transf_N"/>
</dbReference>
<dbReference type="InterPro" id="IPR036477">
    <property type="entry name" value="Formyl_transf_N_sf"/>
</dbReference>
<dbReference type="InterPro" id="IPR011034">
    <property type="entry name" value="Formyl_transferase-like_C_sf"/>
</dbReference>
<dbReference type="InterPro" id="IPR044135">
    <property type="entry name" value="Met-tRNA-FMT_C"/>
</dbReference>
<dbReference type="InterPro" id="IPR041711">
    <property type="entry name" value="Met-tRNA-FMT_N"/>
</dbReference>
<dbReference type="NCBIfam" id="TIGR00460">
    <property type="entry name" value="fmt"/>
    <property type="match status" value="1"/>
</dbReference>
<dbReference type="PANTHER" id="PTHR11138">
    <property type="entry name" value="METHIONYL-TRNA FORMYLTRANSFERASE"/>
    <property type="match status" value="1"/>
</dbReference>
<dbReference type="PANTHER" id="PTHR11138:SF5">
    <property type="entry name" value="METHIONYL-TRNA FORMYLTRANSFERASE, MITOCHONDRIAL"/>
    <property type="match status" value="1"/>
</dbReference>
<dbReference type="Pfam" id="PF02911">
    <property type="entry name" value="Formyl_trans_C"/>
    <property type="match status" value="1"/>
</dbReference>
<dbReference type="Pfam" id="PF00551">
    <property type="entry name" value="Formyl_trans_N"/>
    <property type="match status" value="1"/>
</dbReference>
<dbReference type="SUPFAM" id="SSF50486">
    <property type="entry name" value="FMT C-terminal domain-like"/>
    <property type="match status" value="1"/>
</dbReference>
<dbReference type="SUPFAM" id="SSF53328">
    <property type="entry name" value="Formyltransferase"/>
    <property type="match status" value="1"/>
</dbReference>